<keyword id="KW-0053">Apoptosis</keyword>
<keyword id="KW-0112">Calmodulin-binding</keyword>
<keyword id="KW-1003">Cell membrane</keyword>
<keyword id="KW-1015">Disulfide bond</keyword>
<keyword id="KW-0325">Glycoprotein</keyword>
<keyword id="KW-0449">Lipoprotein</keyword>
<keyword id="KW-0472">Membrane</keyword>
<keyword id="KW-0564">Palmitate</keyword>
<keyword id="KW-0597">Phosphoprotein</keyword>
<keyword id="KW-0675">Receptor</keyword>
<keyword id="KW-1185">Reference proteome</keyword>
<keyword id="KW-0677">Repeat</keyword>
<keyword id="KW-0732">Signal</keyword>
<keyword id="KW-0812">Transmembrane</keyword>
<keyword id="KW-1133">Transmembrane helix</keyword>
<reference key="1">
    <citation type="journal article" date="2000" name="Hum. Immunol.">
        <title>Molecular cloning and characterization of cynomolgus monkey Fas.</title>
        <authorList>
            <person name="Murayama Y."/>
            <person name="Terao K."/>
            <person name="Inoue-Murayama M."/>
        </authorList>
    </citation>
    <scope>NUCLEOTIDE SEQUENCE [MRNA]</scope>
</reference>
<sequence length="331" mass="37266">MLGIWTLLPLVLTSVVRLLSKCVNAQVTDISSKGFELRKIVTTIETQNLEGLHHEGQFCRNPCPPGERKARDCTVNEDEPDCVPCQEGKEYTDKGHFSSKCRRCRLCDEGHGLEVEINCTRTQNTKCRCKPNFFCNSAVCEHCDPCTKCEHGIIEECTLTSNTKCKEEDSRSDLPWLCLLLLLIPPIVYVVIKKACRKHRKENQGPHESTTLNPETAINLSDVDLSKYITTIAGAMTLSQVKDFVRKNGVSEAKIDEIKNDNVQDTAEQKVQLLRNWYQLHGKKDACDTLIKGLKTADLCTLAEKIHAVILKDITSDTENSNFRNEIQSLV</sequence>
<proteinExistence type="evidence at transcript level"/>
<name>TNR6_MACFA</name>
<accession>Q9TSN4</accession>
<dbReference type="EMBL" id="AB031420">
    <property type="protein sequence ID" value="BAA83551.1"/>
    <property type="molecule type" value="mRNA"/>
</dbReference>
<dbReference type="RefSeq" id="NP_001270444.1">
    <property type="nucleotide sequence ID" value="NM_001283515.1"/>
</dbReference>
<dbReference type="SMR" id="Q9TSN4"/>
<dbReference type="STRING" id="9541.ENSMFAP00000020707"/>
<dbReference type="GlyCosmos" id="Q9TSN4">
    <property type="glycosylation" value="1 site, No reported glycans"/>
</dbReference>
<dbReference type="eggNOG" id="ENOG502S0SV">
    <property type="taxonomic scope" value="Eukaryota"/>
</dbReference>
<dbReference type="Proteomes" id="UP000233100">
    <property type="component" value="Unplaced"/>
</dbReference>
<dbReference type="GO" id="GO:0031265">
    <property type="term" value="C:CD95 death-inducing signaling complex"/>
    <property type="evidence" value="ECO:0007669"/>
    <property type="project" value="TreeGrafter"/>
</dbReference>
<dbReference type="GO" id="GO:0009897">
    <property type="term" value="C:external side of plasma membrane"/>
    <property type="evidence" value="ECO:0007669"/>
    <property type="project" value="TreeGrafter"/>
</dbReference>
<dbReference type="GO" id="GO:0045121">
    <property type="term" value="C:membrane raft"/>
    <property type="evidence" value="ECO:0007669"/>
    <property type="project" value="UniProtKB-SubCell"/>
</dbReference>
<dbReference type="GO" id="GO:0005516">
    <property type="term" value="F:calmodulin binding"/>
    <property type="evidence" value="ECO:0000250"/>
    <property type="project" value="UniProtKB"/>
</dbReference>
<dbReference type="GO" id="GO:0005031">
    <property type="term" value="F:tumor necrosis factor receptor activity"/>
    <property type="evidence" value="ECO:0007669"/>
    <property type="project" value="TreeGrafter"/>
</dbReference>
<dbReference type="GO" id="GO:0006924">
    <property type="term" value="P:activation-induced cell death of T cells"/>
    <property type="evidence" value="ECO:0007669"/>
    <property type="project" value="TreeGrafter"/>
</dbReference>
<dbReference type="GO" id="GO:0097192">
    <property type="term" value="P:extrinsic apoptotic signaling pathway in absence of ligand"/>
    <property type="evidence" value="ECO:0007669"/>
    <property type="project" value="TreeGrafter"/>
</dbReference>
<dbReference type="GO" id="GO:0006955">
    <property type="term" value="P:immune response"/>
    <property type="evidence" value="ECO:0007669"/>
    <property type="project" value="InterPro"/>
</dbReference>
<dbReference type="GO" id="GO:0097049">
    <property type="term" value="P:motor neuron apoptotic process"/>
    <property type="evidence" value="ECO:0007669"/>
    <property type="project" value="TreeGrafter"/>
</dbReference>
<dbReference type="GO" id="GO:0097527">
    <property type="term" value="P:necroptotic signaling pathway"/>
    <property type="evidence" value="ECO:0007669"/>
    <property type="project" value="TreeGrafter"/>
</dbReference>
<dbReference type="GO" id="GO:0043066">
    <property type="term" value="P:negative regulation of apoptotic process"/>
    <property type="evidence" value="ECO:0007669"/>
    <property type="project" value="TreeGrafter"/>
</dbReference>
<dbReference type="GO" id="GO:0032872">
    <property type="term" value="P:regulation of stress-activated MAPK cascade"/>
    <property type="evidence" value="ECO:0007669"/>
    <property type="project" value="TreeGrafter"/>
</dbReference>
<dbReference type="CDD" id="cd08316">
    <property type="entry name" value="Death_FAS_TNFRSF6"/>
    <property type="match status" value="1"/>
</dbReference>
<dbReference type="CDD" id="cd10579">
    <property type="entry name" value="TNFRSF6"/>
    <property type="match status" value="1"/>
</dbReference>
<dbReference type="FunFam" id="1.10.533.10:FF:000057">
    <property type="entry name" value="Tumor necrosis factor receptor superfamily member 6"/>
    <property type="match status" value="1"/>
</dbReference>
<dbReference type="FunFam" id="2.10.50.10:FF:000021">
    <property type="entry name" value="Tumor necrosis factor receptor superfamily member 6"/>
    <property type="match status" value="1"/>
</dbReference>
<dbReference type="Gene3D" id="1.10.533.10">
    <property type="entry name" value="Death Domain, Fas"/>
    <property type="match status" value="1"/>
</dbReference>
<dbReference type="Gene3D" id="2.10.50.10">
    <property type="entry name" value="Tumor Necrosis Factor Receptor, subunit A, domain 2"/>
    <property type="match status" value="2"/>
</dbReference>
<dbReference type="InterPro" id="IPR011029">
    <property type="entry name" value="DEATH-like_dom_sf"/>
</dbReference>
<dbReference type="InterPro" id="IPR000488">
    <property type="entry name" value="Death_dom"/>
</dbReference>
<dbReference type="InterPro" id="IPR008063">
    <property type="entry name" value="Fas_rcpt"/>
</dbReference>
<dbReference type="InterPro" id="IPR001368">
    <property type="entry name" value="TNFR/NGFR_Cys_rich_reg"/>
</dbReference>
<dbReference type="InterPro" id="IPR033998">
    <property type="entry name" value="TNFRSF6_death"/>
</dbReference>
<dbReference type="InterPro" id="IPR033999">
    <property type="entry name" value="TNFRSF6_N"/>
</dbReference>
<dbReference type="PANTHER" id="PTHR46874">
    <property type="entry name" value="TUMOR NECROSIS FACTOR RECEPTOR SUPERFAMILY MEMBER 6"/>
    <property type="match status" value="1"/>
</dbReference>
<dbReference type="PANTHER" id="PTHR46874:SF1">
    <property type="entry name" value="TUMOR NECROSIS FACTOR RECEPTOR SUPERFAMILY MEMBER 6"/>
    <property type="match status" value="1"/>
</dbReference>
<dbReference type="Pfam" id="PF00531">
    <property type="entry name" value="Death"/>
    <property type="match status" value="1"/>
</dbReference>
<dbReference type="Pfam" id="PF00020">
    <property type="entry name" value="TNFR_c6"/>
    <property type="match status" value="2"/>
</dbReference>
<dbReference type="PRINTS" id="PR01680">
    <property type="entry name" value="TNFACTORR6"/>
</dbReference>
<dbReference type="SMART" id="SM00005">
    <property type="entry name" value="DEATH"/>
    <property type="match status" value="1"/>
</dbReference>
<dbReference type="SMART" id="SM00208">
    <property type="entry name" value="TNFR"/>
    <property type="match status" value="2"/>
</dbReference>
<dbReference type="SUPFAM" id="SSF47986">
    <property type="entry name" value="DEATH domain"/>
    <property type="match status" value="1"/>
</dbReference>
<dbReference type="SUPFAM" id="SSF57586">
    <property type="entry name" value="TNF receptor-like"/>
    <property type="match status" value="2"/>
</dbReference>
<dbReference type="PROSITE" id="PS50017">
    <property type="entry name" value="DEATH_DOMAIN"/>
    <property type="match status" value="1"/>
</dbReference>
<dbReference type="PROSITE" id="PS00652">
    <property type="entry name" value="TNFR_NGFR_1"/>
    <property type="match status" value="2"/>
</dbReference>
<dbReference type="PROSITE" id="PS50050">
    <property type="entry name" value="TNFR_NGFR_2"/>
    <property type="match status" value="2"/>
</dbReference>
<evidence type="ECO:0000250" key="1"/>
<evidence type="ECO:0000250" key="2">
    <source>
        <dbReference type="UniProtKB" id="P25445"/>
    </source>
</evidence>
<evidence type="ECO:0000250" key="3">
    <source>
        <dbReference type="UniProtKB" id="P25446"/>
    </source>
</evidence>
<evidence type="ECO:0000250" key="4">
    <source>
        <dbReference type="UniProtKB" id="P51867"/>
    </source>
</evidence>
<evidence type="ECO:0000255" key="5"/>
<evidence type="ECO:0000255" key="6">
    <source>
        <dbReference type="PROSITE-ProRule" id="PRU00064"/>
    </source>
</evidence>
<evidence type="ECO:0000255" key="7">
    <source>
        <dbReference type="PROSITE-ProRule" id="PRU00206"/>
    </source>
</evidence>
<protein>
    <recommendedName>
        <fullName>Tumor necrosis factor receptor superfamily member 6</fullName>
    </recommendedName>
    <alternativeName>
        <fullName>Apo-1 antigen</fullName>
    </alternativeName>
    <alternativeName>
        <fullName>Apoptosis-mediating surface antigen FAS</fullName>
    </alternativeName>
    <alternativeName>
        <fullName>FASLG receptor</fullName>
    </alternativeName>
    <cdAntigenName>CD95</cdAntigenName>
</protein>
<organism>
    <name type="scientific">Macaca fascicularis</name>
    <name type="common">Crab-eating macaque</name>
    <name type="synonym">Cynomolgus monkey</name>
    <dbReference type="NCBI Taxonomy" id="9541"/>
    <lineage>
        <taxon>Eukaryota</taxon>
        <taxon>Metazoa</taxon>
        <taxon>Chordata</taxon>
        <taxon>Craniata</taxon>
        <taxon>Vertebrata</taxon>
        <taxon>Euteleostomi</taxon>
        <taxon>Mammalia</taxon>
        <taxon>Eutheria</taxon>
        <taxon>Euarchontoglires</taxon>
        <taxon>Primates</taxon>
        <taxon>Haplorrhini</taxon>
        <taxon>Catarrhini</taxon>
        <taxon>Cercopithecidae</taxon>
        <taxon>Cercopithecinae</taxon>
        <taxon>Macaca</taxon>
    </lineage>
</organism>
<feature type="signal peptide" evidence="5">
    <location>
        <begin position="1"/>
        <end position="25"/>
    </location>
</feature>
<feature type="chain" id="PRO_0000034564" description="Tumor necrosis factor receptor superfamily member 6">
    <location>
        <begin position="26"/>
        <end position="331"/>
    </location>
</feature>
<feature type="topological domain" description="Extracellular" evidence="5">
    <location>
        <begin position="26"/>
        <end position="171"/>
    </location>
</feature>
<feature type="transmembrane region" description="Helical" evidence="5">
    <location>
        <begin position="172"/>
        <end position="192"/>
    </location>
</feature>
<feature type="topological domain" description="Cytoplasmic" evidence="5">
    <location>
        <begin position="193"/>
        <end position="331"/>
    </location>
</feature>
<feature type="repeat" description="TNFR-Cys 1">
    <location>
        <begin position="47"/>
        <end position="83"/>
    </location>
</feature>
<feature type="repeat" description="TNFR-Cys 2">
    <location>
        <begin position="84"/>
        <end position="127"/>
    </location>
</feature>
<feature type="repeat" description="TNFR-Cys 3">
    <location>
        <begin position="128"/>
        <end position="166"/>
    </location>
</feature>
<feature type="domain" description="Death" evidence="6">
    <location>
        <begin position="226"/>
        <end position="310"/>
    </location>
</feature>
<feature type="region of interest" description="Interaction with HIPK3" evidence="1">
    <location>
        <begin position="209"/>
        <end position="313"/>
    </location>
</feature>
<feature type="region of interest" description="Interaction with CALM" evidence="2">
    <location>
        <begin position="226"/>
        <end position="250"/>
    </location>
</feature>
<feature type="modified residue" description="Phosphothreonine" evidence="3">
    <location>
        <position position="211"/>
    </location>
</feature>
<feature type="modified residue" description="Phosphoserine" evidence="2">
    <location>
        <position position="221"/>
    </location>
</feature>
<feature type="modified residue" description="Phosphothreonine" evidence="3">
    <location>
        <position position="318"/>
    </location>
</feature>
<feature type="lipid moiety-binding region" description="S-palmitoyl cysteine" evidence="2">
    <location>
        <position position="196"/>
    </location>
</feature>
<feature type="glycosylation site" description="N-linked (GlcNAc...) asparagine" evidence="5">
    <location>
        <position position="118"/>
    </location>
</feature>
<feature type="disulfide bond" evidence="7">
    <location>
        <begin position="59"/>
        <end position="73"/>
    </location>
</feature>
<feature type="disulfide bond" evidence="7">
    <location>
        <begin position="63"/>
        <end position="82"/>
    </location>
</feature>
<feature type="disulfide bond" evidence="7">
    <location>
        <begin position="85"/>
        <end position="101"/>
    </location>
</feature>
<feature type="disulfide bond" evidence="7">
    <location>
        <begin position="104"/>
        <end position="119"/>
    </location>
</feature>
<feature type="disulfide bond" evidence="7">
    <location>
        <begin position="107"/>
        <end position="127"/>
    </location>
</feature>
<feature type="disulfide bond" evidence="7">
    <location>
        <begin position="129"/>
        <end position="143"/>
    </location>
</feature>
<feature type="disulfide bond" evidence="7">
    <location>
        <begin position="146"/>
        <end position="157"/>
    </location>
</feature>
<feature type="disulfide bond" evidence="7">
    <location>
        <begin position="149"/>
        <end position="165"/>
    </location>
</feature>
<gene>
    <name type="primary">FAS</name>
    <name type="synonym">APT1</name>
    <name type="synonym">TNFRSF6</name>
</gene>
<comment type="function">
    <text evidence="2">Receptor for TNFSF6/FASLG. The adapter molecule FADD recruits caspase CASP8 to the activated receptor. The resulting death-inducing signaling complex (DISC) performs CASP8 proteolytic activation which initiates the subsequent cascade of caspases (aspartate-specific cysteine proteases) mediating apoptosis. FAS-mediated apoptosis may have a role in the induction of peripheral tolerance, in the antigen-stimulated suicide of mature T-cells, or both (By similarity).</text>
</comment>
<comment type="subunit">
    <text evidence="2 3">Component of the death-induced signaling complex (DISC) composed of cell surface receptor FAS/CD95, adapter protein FADD and the CASP8 protease; recruitment of CASP8 to the complex is required for processing of CASP8 into the p18 and p10 subunits (By similarity). Interacts directly (via DED domain) with NOL3 (via CARD domain); inhibits death-inducing signaling complex (DISC) assembly by inhibiting the increase in FAS-FADD binding induced by FAS activation (By similarity). Binds DAXX. Interacts with HIPK3 (By similarity). Part of a complex containing HIPK3 and FADD (By similarity). Binds RIPK1 and FAIM2. Interacts with BABAM2 and FEM1B. Interacts with CALM (By similarity). In the absence of stimulation, interacts with BIRC2, DDX3X and GSK3B. The interaction with BIRC2 and DDX3X is further enhanced upon receptor stimulation and accompanied by DDX3X and BIRC2 cleavage (By similarity).</text>
</comment>
<comment type="subcellular location">
    <subcellularLocation>
        <location evidence="4">Cell membrane</location>
        <topology evidence="4">Single-pass type I membrane protein</topology>
    </subcellularLocation>
    <subcellularLocation>
        <location evidence="2">Membrane raft</location>
    </subcellularLocation>
</comment>
<comment type="domain">
    <text>Contains a death domain involved in the binding of FADD, and maybe to other cytosolic adapter proteins.</text>
</comment>
<comment type="PTM">
    <text evidence="2">Palmitoylated. Palmitoylation by ZDHHC7 prevents the lysosomal degradation of FAS regulating its expression at the plasma membrane.</text>
</comment>